<accession>A1SZR8</accession>
<reference key="1">
    <citation type="journal article" date="2008" name="BMC Genomics">
        <title>Genomics of an extreme psychrophile, Psychromonas ingrahamii.</title>
        <authorList>
            <person name="Riley M."/>
            <person name="Staley J.T."/>
            <person name="Danchin A."/>
            <person name="Wang T.Z."/>
            <person name="Brettin T.S."/>
            <person name="Hauser L.J."/>
            <person name="Land M.L."/>
            <person name="Thompson L.S."/>
        </authorList>
    </citation>
    <scope>NUCLEOTIDE SEQUENCE [LARGE SCALE GENOMIC DNA]</scope>
    <source>
        <strain>DSM 17664 / CCUG 51855 / 37</strain>
    </source>
</reference>
<sequence length="170" mass="18032">MHYNTSLLCDIYADTVDVVEPLLTNFGGRNSFAGEVVTIKCFESVGLIYKALEENGLGKVLLVDGGGSLRRALVNAHIAELAVENGWEGIVVNGCVREVDLLEDLDIGIQAITAIPVGAEDTQIGEVNSPVNFAGVTFLPEDILYADSTGIIISPEPLNAEALTESDEIA</sequence>
<gene>
    <name evidence="1" type="primary">rraA</name>
    <name type="ordered locus">Ping_3296</name>
</gene>
<evidence type="ECO:0000255" key="1">
    <source>
        <dbReference type="HAMAP-Rule" id="MF_00471"/>
    </source>
</evidence>
<feature type="chain" id="PRO_1000013866" description="Regulator of ribonuclease activity A">
    <location>
        <begin position="1"/>
        <end position="170"/>
    </location>
</feature>
<name>RRAA_PSYIN</name>
<dbReference type="EMBL" id="CP000510">
    <property type="protein sequence ID" value="ABM04983.1"/>
    <property type="molecule type" value="Genomic_DNA"/>
</dbReference>
<dbReference type="RefSeq" id="WP_011771535.1">
    <property type="nucleotide sequence ID" value="NC_008709.1"/>
</dbReference>
<dbReference type="SMR" id="A1SZR8"/>
<dbReference type="STRING" id="357804.Ping_3296"/>
<dbReference type="KEGG" id="pin:Ping_3296"/>
<dbReference type="eggNOG" id="COG0684">
    <property type="taxonomic scope" value="Bacteria"/>
</dbReference>
<dbReference type="HOGENOM" id="CLU_072626_4_0_6"/>
<dbReference type="OrthoDB" id="943692at2"/>
<dbReference type="Proteomes" id="UP000000639">
    <property type="component" value="Chromosome"/>
</dbReference>
<dbReference type="GO" id="GO:0005737">
    <property type="term" value="C:cytoplasm"/>
    <property type="evidence" value="ECO:0007669"/>
    <property type="project" value="UniProtKB-SubCell"/>
</dbReference>
<dbReference type="GO" id="GO:0060698">
    <property type="term" value="F:endoribonuclease inhibitor activity"/>
    <property type="evidence" value="ECO:0007669"/>
    <property type="project" value="UniProtKB-UniRule"/>
</dbReference>
<dbReference type="GO" id="GO:0019899">
    <property type="term" value="F:enzyme binding"/>
    <property type="evidence" value="ECO:0007669"/>
    <property type="project" value="UniProtKB-UniRule"/>
</dbReference>
<dbReference type="GO" id="GO:0051252">
    <property type="term" value="P:regulation of RNA metabolic process"/>
    <property type="evidence" value="ECO:0007669"/>
    <property type="project" value="InterPro"/>
</dbReference>
<dbReference type="CDD" id="cd16841">
    <property type="entry name" value="RraA_family"/>
    <property type="match status" value="1"/>
</dbReference>
<dbReference type="Gene3D" id="3.50.30.40">
    <property type="entry name" value="Ribonuclease E inhibitor RraA/RraA-like"/>
    <property type="match status" value="1"/>
</dbReference>
<dbReference type="HAMAP" id="MF_00471">
    <property type="entry name" value="RraA"/>
    <property type="match status" value="1"/>
</dbReference>
<dbReference type="InterPro" id="IPR010203">
    <property type="entry name" value="RraA"/>
</dbReference>
<dbReference type="InterPro" id="IPR005493">
    <property type="entry name" value="RraA/RraA-like"/>
</dbReference>
<dbReference type="InterPro" id="IPR036704">
    <property type="entry name" value="RraA/RraA-like_sf"/>
</dbReference>
<dbReference type="InterPro" id="IPR014339">
    <property type="entry name" value="RraA_gpbac"/>
</dbReference>
<dbReference type="NCBIfam" id="TIGR01935">
    <property type="entry name" value="NOT-MenG"/>
    <property type="match status" value="1"/>
</dbReference>
<dbReference type="NCBIfam" id="NF006875">
    <property type="entry name" value="PRK09372.1"/>
    <property type="match status" value="1"/>
</dbReference>
<dbReference type="NCBIfam" id="TIGR02998">
    <property type="entry name" value="RraA_entero"/>
    <property type="match status" value="1"/>
</dbReference>
<dbReference type="PANTHER" id="PTHR33254">
    <property type="entry name" value="4-HYDROXY-4-METHYL-2-OXOGLUTARATE ALDOLASE 3-RELATED"/>
    <property type="match status" value="1"/>
</dbReference>
<dbReference type="PANTHER" id="PTHR33254:SF29">
    <property type="entry name" value="REGULATOR OF RIBONUCLEASE ACTIVITY A"/>
    <property type="match status" value="1"/>
</dbReference>
<dbReference type="Pfam" id="PF03737">
    <property type="entry name" value="RraA-like"/>
    <property type="match status" value="1"/>
</dbReference>
<dbReference type="SUPFAM" id="SSF89562">
    <property type="entry name" value="RraA-like"/>
    <property type="match status" value="1"/>
</dbReference>
<organism>
    <name type="scientific">Psychromonas ingrahamii (strain DSM 17664 / CCUG 51855 / 37)</name>
    <dbReference type="NCBI Taxonomy" id="357804"/>
    <lineage>
        <taxon>Bacteria</taxon>
        <taxon>Pseudomonadati</taxon>
        <taxon>Pseudomonadota</taxon>
        <taxon>Gammaproteobacteria</taxon>
        <taxon>Alteromonadales</taxon>
        <taxon>Psychromonadaceae</taxon>
        <taxon>Psychromonas</taxon>
    </lineage>
</organism>
<proteinExistence type="inferred from homology"/>
<comment type="function">
    <text evidence="1">Globally modulates RNA abundance by binding to RNase E (Rne) and regulating its endonucleolytic activity. Can modulate Rne action in a substrate-dependent manner by altering the composition of the degradosome. Modulates RNA-binding and helicase activities of the degradosome.</text>
</comment>
<comment type="subunit">
    <text evidence="1">Homotrimer. Binds to both RNA-binding sites in the C-terminal region of Rne and to RhlB.</text>
</comment>
<comment type="subcellular location">
    <subcellularLocation>
        <location evidence="1">Cytoplasm</location>
    </subcellularLocation>
</comment>
<comment type="similarity">
    <text evidence="1">Belongs to the RraA family.</text>
</comment>
<protein>
    <recommendedName>
        <fullName evidence="1">Regulator of ribonuclease activity A</fullName>
    </recommendedName>
</protein>
<keyword id="KW-0963">Cytoplasm</keyword>
<keyword id="KW-1185">Reference proteome</keyword>